<reference key="1">
    <citation type="journal article" date="2003" name="Science">
        <title>Genome of Geobacter sulfurreducens: metal reduction in subsurface environments.</title>
        <authorList>
            <person name="Methe B.A."/>
            <person name="Nelson K.E."/>
            <person name="Eisen J.A."/>
            <person name="Paulsen I.T."/>
            <person name="Nelson W.C."/>
            <person name="Heidelberg J.F."/>
            <person name="Wu D."/>
            <person name="Wu M."/>
            <person name="Ward N.L."/>
            <person name="Beanan M.J."/>
            <person name="Dodson R.J."/>
            <person name="Madupu R."/>
            <person name="Brinkac L.M."/>
            <person name="Daugherty S.C."/>
            <person name="DeBoy R.T."/>
            <person name="Durkin A.S."/>
            <person name="Gwinn M.L."/>
            <person name="Kolonay J.F."/>
            <person name="Sullivan S.A."/>
            <person name="Haft D.H."/>
            <person name="Selengut J."/>
            <person name="Davidsen T.M."/>
            <person name="Zafar N."/>
            <person name="White O."/>
            <person name="Tran B."/>
            <person name="Romero C."/>
            <person name="Forberger H.A."/>
            <person name="Weidman J.F."/>
            <person name="Khouri H.M."/>
            <person name="Feldblyum T.V."/>
            <person name="Utterback T.R."/>
            <person name="Van Aken S.E."/>
            <person name="Lovley D.R."/>
            <person name="Fraser C.M."/>
        </authorList>
    </citation>
    <scope>NUCLEOTIDE SEQUENCE [LARGE SCALE GENOMIC DNA]</scope>
    <source>
        <strain>ATCC 51573 / DSM 12127 / PCA</strain>
    </source>
</reference>
<proteinExistence type="inferred from homology"/>
<dbReference type="EC" id="2.5.1.3" evidence="2"/>
<dbReference type="EC" id="2.7.1.49" evidence="3"/>
<dbReference type="EC" id="2.7.4.7" evidence="3"/>
<dbReference type="EMBL" id="AE017180">
    <property type="protein sequence ID" value="AAR33936.1"/>
    <property type="molecule type" value="Genomic_DNA"/>
</dbReference>
<dbReference type="RefSeq" id="NP_951663.1">
    <property type="nucleotide sequence ID" value="NC_002939.5"/>
</dbReference>
<dbReference type="SMR" id="P61422"/>
<dbReference type="FunCoup" id="P61422">
    <property type="interactions" value="485"/>
</dbReference>
<dbReference type="STRING" id="243231.GSU0605"/>
<dbReference type="EnsemblBacteria" id="AAR33936">
    <property type="protein sequence ID" value="AAR33936"/>
    <property type="gene ID" value="GSU0605"/>
</dbReference>
<dbReference type="KEGG" id="gsu:GSU0605"/>
<dbReference type="PATRIC" id="fig|243231.5.peg.603"/>
<dbReference type="eggNOG" id="COG0351">
    <property type="taxonomic scope" value="Bacteria"/>
</dbReference>
<dbReference type="eggNOG" id="COG0352">
    <property type="taxonomic scope" value="Bacteria"/>
</dbReference>
<dbReference type="HOGENOM" id="CLU_020520_5_1_7"/>
<dbReference type="InParanoid" id="P61422"/>
<dbReference type="OrthoDB" id="9810880at2"/>
<dbReference type="UniPathway" id="UPA00060">
    <property type="reaction ID" value="UER00138"/>
</dbReference>
<dbReference type="UniPathway" id="UPA00060">
    <property type="reaction ID" value="UER00141"/>
</dbReference>
<dbReference type="Proteomes" id="UP000000577">
    <property type="component" value="Chromosome"/>
</dbReference>
<dbReference type="GO" id="GO:0005829">
    <property type="term" value="C:cytosol"/>
    <property type="evidence" value="ECO:0000318"/>
    <property type="project" value="GO_Central"/>
</dbReference>
<dbReference type="GO" id="GO:0005524">
    <property type="term" value="F:ATP binding"/>
    <property type="evidence" value="ECO:0007669"/>
    <property type="project" value="UniProtKB-KW"/>
</dbReference>
<dbReference type="GO" id="GO:0008902">
    <property type="term" value="F:hydroxymethylpyrimidine kinase activity"/>
    <property type="evidence" value="ECO:0000318"/>
    <property type="project" value="GO_Central"/>
</dbReference>
<dbReference type="GO" id="GO:0000287">
    <property type="term" value="F:magnesium ion binding"/>
    <property type="evidence" value="ECO:0007669"/>
    <property type="project" value="UniProtKB-UniRule"/>
</dbReference>
<dbReference type="GO" id="GO:0008972">
    <property type="term" value="F:phosphomethylpyrimidine kinase activity"/>
    <property type="evidence" value="ECO:0000318"/>
    <property type="project" value="GO_Central"/>
</dbReference>
<dbReference type="GO" id="GO:0004789">
    <property type="term" value="F:thiamine-phosphate diphosphorylase activity"/>
    <property type="evidence" value="ECO:0007669"/>
    <property type="project" value="UniProtKB-UniRule"/>
</dbReference>
<dbReference type="GO" id="GO:0009228">
    <property type="term" value="P:thiamine biosynthetic process"/>
    <property type="evidence" value="ECO:0000318"/>
    <property type="project" value="GO_Central"/>
</dbReference>
<dbReference type="GO" id="GO:0009229">
    <property type="term" value="P:thiamine diphosphate biosynthetic process"/>
    <property type="evidence" value="ECO:0007669"/>
    <property type="project" value="UniProtKB-UniRule"/>
</dbReference>
<dbReference type="CDD" id="cd01169">
    <property type="entry name" value="HMPP_kinase"/>
    <property type="match status" value="1"/>
</dbReference>
<dbReference type="CDD" id="cd00564">
    <property type="entry name" value="TMP_TenI"/>
    <property type="match status" value="1"/>
</dbReference>
<dbReference type="FunFam" id="3.40.1190.20:FF:000003">
    <property type="entry name" value="Phosphomethylpyrimidine kinase ThiD"/>
    <property type="match status" value="1"/>
</dbReference>
<dbReference type="FunFam" id="3.20.20.70:FF:000096">
    <property type="entry name" value="Thiamine-phosphate synthase"/>
    <property type="match status" value="1"/>
</dbReference>
<dbReference type="Gene3D" id="3.40.1190.20">
    <property type="match status" value="1"/>
</dbReference>
<dbReference type="Gene3D" id="3.20.20.70">
    <property type="entry name" value="Aldolase class I"/>
    <property type="match status" value="1"/>
</dbReference>
<dbReference type="HAMAP" id="MF_00097">
    <property type="entry name" value="TMP_synthase"/>
    <property type="match status" value="1"/>
</dbReference>
<dbReference type="InterPro" id="IPR013785">
    <property type="entry name" value="Aldolase_TIM"/>
</dbReference>
<dbReference type="InterPro" id="IPR004399">
    <property type="entry name" value="HMP/HMP-P_kinase_dom"/>
</dbReference>
<dbReference type="InterPro" id="IPR013749">
    <property type="entry name" value="PM/HMP-P_kinase-1"/>
</dbReference>
<dbReference type="InterPro" id="IPR029056">
    <property type="entry name" value="Ribokinase-like"/>
</dbReference>
<dbReference type="InterPro" id="IPR036206">
    <property type="entry name" value="ThiamineP_synth_sf"/>
</dbReference>
<dbReference type="InterPro" id="IPR022998">
    <property type="entry name" value="ThiamineP_synth_TenI"/>
</dbReference>
<dbReference type="InterPro" id="IPR034291">
    <property type="entry name" value="TMP_synthase"/>
</dbReference>
<dbReference type="NCBIfam" id="TIGR00097">
    <property type="entry name" value="HMP-P_kinase"/>
    <property type="match status" value="1"/>
</dbReference>
<dbReference type="NCBIfam" id="TIGR00693">
    <property type="entry name" value="thiE"/>
    <property type="match status" value="1"/>
</dbReference>
<dbReference type="PANTHER" id="PTHR20858">
    <property type="entry name" value="PHOSPHOMETHYLPYRIMIDINE KINASE"/>
    <property type="match status" value="1"/>
</dbReference>
<dbReference type="PANTHER" id="PTHR20858:SF21">
    <property type="entry name" value="THIAMINE-PHOSPHATE SYNTHASE"/>
    <property type="match status" value="1"/>
</dbReference>
<dbReference type="Pfam" id="PF08543">
    <property type="entry name" value="Phos_pyr_kin"/>
    <property type="match status" value="1"/>
</dbReference>
<dbReference type="Pfam" id="PF02581">
    <property type="entry name" value="TMP-TENI"/>
    <property type="match status" value="1"/>
</dbReference>
<dbReference type="SUPFAM" id="SSF53613">
    <property type="entry name" value="Ribokinase-like"/>
    <property type="match status" value="1"/>
</dbReference>
<dbReference type="SUPFAM" id="SSF51391">
    <property type="entry name" value="Thiamin phosphate synthase"/>
    <property type="match status" value="1"/>
</dbReference>
<accession>P61422</accession>
<feature type="chain" id="PRO_0000192040" description="Thiamine biosynthesis bifunctional protein ThiED">
    <location>
        <begin position="1"/>
        <end position="490"/>
    </location>
</feature>
<feature type="region of interest" description="Thiamine-phosphate synthase">
    <location>
        <begin position="1"/>
        <end position="213"/>
    </location>
</feature>
<feature type="region of interest" description="Hydroxymethylpyrimidine/phosphomethylpyrimidine kinase">
    <location>
        <begin position="229"/>
        <end position="490"/>
    </location>
</feature>
<feature type="binding site" evidence="1">
    <location>
        <begin position="50"/>
        <end position="54"/>
    </location>
    <ligand>
        <name>4-amino-2-methyl-5-(diphosphooxymethyl)pyrimidine</name>
        <dbReference type="ChEBI" id="CHEBI:57841"/>
    </ligand>
</feature>
<feature type="binding site" evidence="1">
    <location>
        <position position="82"/>
    </location>
    <ligand>
        <name>4-amino-2-methyl-5-(diphosphooxymethyl)pyrimidine</name>
        <dbReference type="ChEBI" id="CHEBI:57841"/>
    </ligand>
</feature>
<feature type="binding site" evidence="1">
    <location>
        <position position="83"/>
    </location>
    <ligand>
        <name>Mg(2+)</name>
        <dbReference type="ChEBI" id="CHEBI:18420"/>
    </ligand>
</feature>
<feature type="binding site" evidence="1">
    <location>
        <position position="102"/>
    </location>
    <ligand>
        <name>Mg(2+)</name>
        <dbReference type="ChEBI" id="CHEBI:18420"/>
    </ligand>
</feature>
<feature type="binding site" evidence="1">
    <location>
        <position position="121"/>
    </location>
    <ligand>
        <name>4-amino-2-methyl-5-(diphosphooxymethyl)pyrimidine</name>
        <dbReference type="ChEBI" id="CHEBI:57841"/>
    </ligand>
</feature>
<feature type="binding site" evidence="1">
    <location>
        <begin position="147"/>
        <end position="149"/>
    </location>
    <ligand>
        <name>2-[(2R,5Z)-2-carboxy-4-methylthiazol-5(2H)-ylidene]ethyl phosphate</name>
        <dbReference type="ChEBI" id="CHEBI:62899"/>
    </ligand>
</feature>
<feature type="binding site" evidence="1">
    <location>
        <position position="150"/>
    </location>
    <ligand>
        <name>4-amino-2-methyl-5-(diphosphooxymethyl)pyrimidine</name>
        <dbReference type="ChEBI" id="CHEBI:57841"/>
    </ligand>
</feature>
<feature type="binding site" evidence="1">
    <location>
        <position position="177"/>
    </location>
    <ligand>
        <name>2-[(2R,5Z)-2-carboxy-4-methylthiazol-5(2H)-ylidene]ethyl phosphate</name>
        <dbReference type="ChEBI" id="CHEBI:62899"/>
    </ligand>
</feature>
<feature type="binding site" evidence="1">
    <location>
        <begin position="197"/>
        <end position="198"/>
    </location>
    <ligand>
        <name>2-[(2R,5Z)-2-carboxy-4-methylthiazol-5(2H)-ylidene]ethyl phosphate</name>
        <dbReference type="ChEBI" id="CHEBI:62899"/>
    </ligand>
</feature>
<feature type="binding site" evidence="1">
    <location>
        <position position="266"/>
    </location>
    <ligand>
        <name>4-amino-5-hydroxymethyl-2-methylpyrimidine</name>
        <dbReference type="ChEBI" id="CHEBI:16892"/>
    </ligand>
</feature>
<protein>
    <recommendedName>
        <fullName>Thiamine biosynthesis bifunctional protein ThiED</fullName>
    </recommendedName>
    <domain>
        <recommendedName>
            <fullName>Thiamine-phosphate synthase</fullName>
            <shortName>TMP-PPase</shortName>
            <shortName>TP synthase</shortName>
            <shortName>TPS</shortName>
            <ecNumber evidence="2">2.5.1.3</ecNumber>
        </recommendedName>
        <alternativeName>
            <fullName>Thiamine-phosphate pyrophosphorylase</fullName>
            <shortName>TMP pyrophosphorylase</shortName>
        </alternativeName>
    </domain>
    <domain>
        <recommendedName>
            <fullName>Hydroxymethylpyrimidine/phosphomethylpyrimidine kinase</fullName>
            <ecNumber evidence="3">2.7.1.49</ecNumber>
            <ecNumber evidence="3">2.7.4.7</ecNumber>
        </recommendedName>
        <alternativeName>
            <fullName>Hydroxymethylpyrimidine kinase</fullName>
            <shortName>HMP kinase</shortName>
        </alternativeName>
        <alternativeName>
            <fullName>Hydroxymethylpyrimidine phosphate kinase</fullName>
            <shortName>HMP-P kinase</shortName>
            <shortName>HMP-phosphate kinase</shortName>
            <shortName>HMPP kinase</shortName>
        </alternativeName>
    </domain>
</protein>
<gene>
    <name type="primary">thiDE</name>
    <name type="ordered locus">GSU0605</name>
</gene>
<sequence length="490" mass="51910">MASNGHTLRLVINRDKHDSVIRGLYLVTDHDDNLIPRVEAAIDGGARVVQYRNKNQDRESRLALGLELRELCRRRSIPFIVNDDLEMAVSLKADGLHLGQGDGDPREARRVLGPGKIIGVSTHTLSEALEAQAAGVDYIGLGAMFPSRSKEVEHVAGSELLAAIRSSISIPIVAIGGITRDNGASVIDAGADAVAVISAVLSHPDPALAATEIALLFNRRAPFPRGSVLTVAGSDSGGGAGIQADLKTVTLLGSYGSSVLTALTAQNTRGVSGIHGVPPAFVADQLDAVFSDIPVDVVKTGMLFSAETIVAIAAKLTEYRRRMVVVDPVMVAKGGANLIDRGAVSVLKERLFPLAYLVTPNIPEAERLTGANISDEESMREAARRLHRLGARNVLLKGGHLLAGDSVDILFDGAAFHRFVSPRILSKNTHGTGCTFASAIATYLAQGDPLREAIARAKRYITAAIRLAQPLGRGHGPVNHILAAEDVRDR</sequence>
<comment type="function">
    <text evidence="2">Condenses 4-methyl-5-(beta-hydroxyethyl)thiazole monophosphate (THZ-P) and 2-methyl-4-amino-5-hydroxymethyl pyrimidine pyrophosphate (HMP-PP) to form thiamine monophosphate (TMP).</text>
</comment>
<comment type="function">
    <text evidence="3">Catalyzes the phosphorylation of hydroxymethylpyrimidine phosphate (HMP-P) to HMP-PP, and of HMP to HMP-P.</text>
</comment>
<comment type="catalytic activity">
    <reaction evidence="2">
        <text>2-[(2R,5Z)-2-carboxy-4-methylthiazol-5(2H)-ylidene]ethyl phosphate + 4-amino-2-methyl-5-(diphosphooxymethyl)pyrimidine + 2 H(+) = thiamine phosphate + CO2 + diphosphate</text>
        <dbReference type="Rhea" id="RHEA:47844"/>
        <dbReference type="ChEBI" id="CHEBI:15378"/>
        <dbReference type="ChEBI" id="CHEBI:16526"/>
        <dbReference type="ChEBI" id="CHEBI:33019"/>
        <dbReference type="ChEBI" id="CHEBI:37575"/>
        <dbReference type="ChEBI" id="CHEBI:57841"/>
        <dbReference type="ChEBI" id="CHEBI:62899"/>
        <dbReference type="EC" id="2.5.1.3"/>
    </reaction>
</comment>
<comment type="catalytic activity">
    <reaction evidence="2">
        <text>2-(2-carboxy-4-methylthiazol-5-yl)ethyl phosphate + 4-amino-2-methyl-5-(diphosphooxymethyl)pyrimidine + 2 H(+) = thiamine phosphate + CO2 + diphosphate</text>
        <dbReference type="Rhea" id="RHEA:47848"/>
        <dbReference type="ChEBI" id="CHEBI:15378"/>
        <dbReference type="ChEBI" id="CHEBI:16526"/>
        <dbReference type="ChEBI" id="CHEBI:33019"/>
        <dbReference type="ChEBI" id="CHEBI:37575"/>
        <dbReference type="ChEBI" id="CHEBI:57841"/>
        <dbReference type="ChEBI" id="CHEBI:62890"/>
        <dbReference type="EC" id="2.5.1.3"/>
    </reaction>
</comment>
<comment type="catalytic activity">
    <reaction evidence="2">
        <text>4-methyl-5-(2-phosphooxyethyl)-thiazole + 4-amino-2-methyl-5-(diphosphooxymethyl)pyrimidine + H(+) = thiamine phosphate + diphosphate</text>
        <dbReference type="Rhea" id="RHEA:22328"/>
        <dbReference type="ChEBI" id="CHEBI:15378"/>
        <dbReference type="ChEBI" id="CHEBI:33019"/>
        <dbReference type="ChEBI" id="CHEBI:37575"/>
        <dbReference type="ChEBI" id="CHEBI:57841"/>
        <dbReference type="ChEBI" id="CHEBI:58296"/>
        <dbReference type="EC" id="2.5.1.3"/>
    </reaction>
</comment>
<comment type="catalytic activity">
    <reaction evidence="3">
        <text>4-amino-5-hydroxymethyl-2-methylpyrimidine + ATP = 4-amino-2-methyl-5-(phosphooxymethyl)pyrimidine + ADP + H(+)</text>
        <dbReference type="Rhea" id="RHEA:23096"/>
        <dbReference type="ChEBI" id="CHEBI:15378"/>
        <dbReference type="ChEBI" id="CHEBI:16892"/>
        <dbReference type="ChEBI" id="CHEBI:30616"/>
        <dbReference type="ChEBI" id="CHEBI:58354"/>
        <dbReference type="ChEBI" id="CHEBI:456216"/>
        <dbReference type="EC" id="2.7.1.49"/>
    </reaction>
</comment>
<comment type="catalytic activity">
    <reaction evidence="3">
        <text>4-amino-2-methyl-5-(phosphooxymethyl)pyrimidine + ATP = 4-amino-2-methyl-5-(diphosphooxymethyl)pyrimidine + ADP</text>
        <dbReference type="Rhea" id="RHEA:19893"/>
        <dbReference type="ChEBI" id="CHEBI:30616"/>
        <dbReference type="ChEBI" id="CHEBI:57841"/>
        <dbReference type="ChEBI" id="CHEBI:58354"/>
        <dbReference type="ChEBI" id="CHEBI:456216"/>
        <dbReference type="EC" id="2.7.4.7"/>
    </reaction>
</comment>
<comment type="cofactor">
    <cofactor evidence="1">
        <name>Mg(2+)</name>
        <dbReference type="ChEBI" id="CHEBI:18420"/>
    </cofactor>
    <text evidence="1">Binds 1 Mg(2+) ion per subunit.</text>
</comment>
<comment type="pathway">
    <text>Cofactor biosynthesis; thiamine diphosphate biosynthesis; 4-amino-2-methyl-5-diphosphomethylpyrimidine from 5-amino-1-(5-phospho-D-ribosyl)imidazole: step 3/3.</text>
</comment>
<comment type="pathway">
    <text>Cofactor biosynthesis; thiamine diphosphate biosynthesis; thiamine phosphate from 4-amino-2-methyl-5-diphosphomethylpyrimidine and 4-methyl-5-(2-phosphoethyl)-thiazole: step 1/1.</text>
</comment>
<comment type="similarity">
    <text evidence="4">In the N-terminal section; belongs to the thiamine-phosphate synthase family.</text>
</comment>
<comment type="similarity">
    <text evidence="4">In the C-terminal section; belongs to the ThiD family.</text>
</comment>
<name>THIED_GEOSL</name>
<evidence type="ECO:0000250" key="1"/>
<evidence type="ECO:0000250" key="2">
    <source>
        <dbReference type="UniProtKB" id="P39594"/>
    </source>
</evidence>
<evidence type="ECO:0000250" key="3">
    <source>
        <dbReference type="UniProtKB" id="P76422"/>
    </source>
</evidence>
<evidence type="ECO:0000305" key="4"/>
<organism>
    <name type="scientific">Geobacter sulfurreducens (strain ATCC 51573 / DSM 12127 / PCA)</name>
    <dbReference type="NCBI Taxonomy" id="243231"/>
    <lineage>
        <taxon>Bacteria</taxon>
        <taxon>Pseudomonadati</taxon>
        <taxon>Thermodesulfobacteriota</taxon>
        <taxon>Desulfuromonadia</taxon>
        <taxon>Geobacterales</taxon>
        <taxon>Geobacteraceae</taxon>
        <taxon>Geobacter</taxon>
    </lineage>
</organism>
<keyword id="KW-0067">ATP-binding</keyword>
<keyword id="KW-0418">Kinase</keyword>
<keyword id="KW-0460">Magnesium</keyword>
<keyword id="KW-0479">Metal-binding</keyword>
<keyword id="KW-0511">Multifunctional enzyme</keyword>
<keyword id="KW-0547">Nucleotide-binding</keyword>
<keyword id="KW-1185">Reference proteome</keyword>
<keyword id="KW-0784">Thiamine biosynthesis</keyword>
<keyword id="KW-0808">Transferase</keyword>